<keyword id="KW-0539">Nucleus</keyword>
<keyword id="KW-1267">Proteomics identification</keyword>
<keyword id="KW-1185">Reference proteome</keyword>
<keyword id="KW-0833">Ubl conjugation pathway</keyword>
<comment type="function">
    <text evidence="4">Component of a cullin-RING-based BCR (BTB-CUL3-RBX1) E3 ubiquitin-protein ligase complex that mediates the ubiquitination and subsequent proteasomal degradation of target proteins, but with relatively low efficiency. Cullin-RING-based BCR (BTB-CUL3-RBX1) E3 ubiquitin-protein ligase complexes containing homodimeric SPOPL or the heterodimer formed by SPOP and SPOPL are less efficient than ubiquitin ligase complexes containing only SPOP. May function to down-regulate the activity of cullin-RING-based BCR (BTB-CUL3-RBX1) E3 ubiquitin-protein ligase complexes that contain SPOP.</text>
</comment>
<comment type="pathway">
    <text>Protein modification; protein ubiquitination.</text>
</comment>
<comment type="subunit">
    <text evidence="4">Homodimer. Heterodimer with SPOP. Component of cullin-RING-based BCR (BTB-CUL3-RBX1) E3 ubiquitin-protein ligase complexes containing homodimeric SPOPL or the heterodimer formed by SPOP and SPOPL. Interacts with CUL3 and MACROH2A1.</text>
</comment>
<comment type="interaction">
    <interactant intactId="EBI-2822161">
        <id>Q6IQ16</id>
    </interactant>
    <interactant intactId="EBI-1170906">
        <id>P15336</id>
        <label>ATF2</label>
    </interactant>
    <organismsDiffer>false</organismsDiffer>
    <experiments>3</experiments>
</comment>
<comment type="interaction">
    <interactant intactId="EBI-2822161">
        <id>Q6IQ16</id>
    </interactant>
    <interactant intactId="EBI-10192698">
        <id>Q02930-3</id>
        <label>CREB5</label>
    </interactant>
    <organismsDiffer>false</organismsDiffer>
    <experiments>3</experiments>
</comment>
<comment type="interaction">
    <interactant intactId="EBI-2822161">
        <id>Q6IQ16</id>
    </interactant>
    <interactant intactId="EBI-540602">
        <id>O15131</id>
        <label>KPNA5</label>
    </interactant>
    <organismsDiffer>false</organismsDiffer>
    <experiments>5</experiments>
</comment>
<comment type="interaction">
    <interactant intactId="EBI-2822161">
        <id>Q6IQ16</id>
    </interactant>
    <interactant intactId="EBI-447677">
        <id>Q99836</id>
        <label>MYD88</label>
    </interactant>
    <organismsDiffer>false</organismsDiffer>
    <experiments>3</experiments>
</comment>
<comment type="interaction">
    <interactant intactId="EBI-2822161">
        <id>Q6IQ16</id>
    </interactant>
    <interactant intactId="EBI-748576">
        <id>P28702</id>
        <label>RXRB</label>
    </interactant>
    <organismsDiffer>false</organismsDiffer>
    <experiments>3</experiments>
</comment>
<comment type="interaction">
    <interactant intactId="EBI-2822161">
        <id>Q6IQ16</id>
    </interactant>
    <interactant intactId="EBI-743549">
        <id>O43791</id>
        <label>SPOP</label>
    </interactant>
    <organismsDiffer>false</organismsDiffer>
    <experiments>3</experiments>
</comment>
<comment type="interaction">
    <interactant intactId="EBI-2822161">
        <id>Q6IQ16</id>
    </interactant>
    <interactant intactId="EBI-2822161">
        <id>Q6IQ16</id>
        <label>SPOPL</label>
    </interactant>
    <organismsDiffer>false</organismsDiffer>
    <experiments>2</experiments>
</comment>
<comment type="subcellular location">
    <subcellularLocation>
        <location evidence="1">Nucleus</location>
    </subcellularLocation>
</comment>
<comment type="similarity">
    <text evidence="5">Belongs to the Tdpoz family.</text>
</comment>
<sequence>MSREPTPPLPGDMSTGPIAESWCYTQVKVVKFSYMWTINNFSFCREEMGEVLKSSTFSSGPSDKMKWCLRVNPKGLDDESKDYLSLYLLLVSCPKSEVRAKFKFSLLNAKREETKAMESQRAYRFVQGKDWGFKKFIRRDFLLDEANGLLPDDKLTLFCEVSVVQDSVNISGHTNTNTLKVPECRLAEDLGNLWENTRFTDCSFFVRGQEFKAHKSVLAARSPVFNAMFEHEMEESKKNRVEINDLDPEVFKEMMRFIYTGRAPNLDKMADNLLAAADKYALERLKVMCEEALCSNLSVENVADTLVLADLHSAEQLKAQAIDFINRCSVLRQLGCKDGKNWNSNQATDIMETSGWKSMIQSHPHLVAEAFRALASAQCPQFGIPRKRLKQS</sequence>
<accession>Q6IQ16</accession>
<organism>
    <name type="scientific">Homo sapiens</name>
    <name type="common">Human</name>
    <dbReference type="NCBI Taxonomy" id="9606"/>
    <lineage>
        <taxon>Eukaryota</taxon>
        <taxon>Metazoa</taxon>
        <taxon>Chordata</taxon>
        <taxon>Craniata</taxon>
        <taxon>Vertebrata</taxon>
        <taxon>Euteleostomi</taxon>
        <taxon>Mammalia</taxon>
        <taxon>Eutheria</taxon>
        <taxon>Euarchontoglires</taxon>
        <taxon>Primates</taxon>
        <taxon>Haplorrhini</taxon>
        <taxon>Catarrhini</taxon>
        <taxon>Hominidae</taxon>
        <taxon>Homo</taxon>
    </lineage>
</organism>
<dbReference type="EMBL" id="BC071613">
    <property type="protein sequence ID" value="AAH71613.1"/>
    <property type="molecule type" value="mRNA"/>
</dbReference>
<dbReference type="CCDS" id="CCDS33298.1"/>
<dbReference type="RefSeq" id="NP_001001664.1">
    <property type="nucleotide sequence ID" value="NM_001001664.3"/>
</dbReference>
<dbReference type="SMR" id="Q6IQ16"/>
<dbReference type="BioGRID" id="130923">
    <property type="interactions" value="15"/>
</dbReference>
<dbReference type="ComplexPortal" id="CPX-8916">
    <property type="entry name" value="CRL3 E3 ubiquitin ligase complex, SPOP-SPOPL variant"/>
</dbReference>
<dbReference type="ComplexPortal" id="CPX-8917">
    <property type="entry name" value="CRL3 E3 ubiquitin ligase complex, SPOPL variant"/>
</dbReference>
<dbReference type="FunCoup" id="Q6IQ16">
    <property type="interactions" value="2428"/>
</dbReference>
<dbReference type="IntAct" id="Q6IQ16">
    <property type="interactions" value="15"/>
</dbReference>
<dbReference type="STRING" id="9606.ENSP00000280098"/>
<dbReference type="GlyGen" id="Q6IQ16">
    <property type="glycosylation" value="2 sites, 1 O-linked glycan (1 site)"/>
</dbReference>
<dbReference type="iPTMnet" id="Q6IQ16"/>
<dbReference type="PhosphoSitePlus" id="Q6IQ16"/>
<dbReference type="BioMuta" id="SPOPL"/>
<dbReference type="DMDM" id="74736582"/>
<dbReference type="jPOST" id="Q6IQ16"/>
<dbReference type="MassIVE" id="Q6IQ16"/>
<dbReference type="PaxDb" id="9606-ENSP00000280098"/>
<dbReference type="PeptideAtlas" id="Q6IQ16"/>
<dbReference type="ProteomicsDB" id="66471"/>
<dbReference type="Pumba" id="Q6IQ16"/>
<dbReference type="Antibodypedia" id="33596">
    <property type="antibodies" value="128 antibodies from 20 providers"/>
</dbReference>
<dbReference type="DNASU" id="339745"/>
<dbReference type="Ensembl" id="ENST00000280098.9">
    <property type="protein sequence ID" value="ENSP00000280098.4"/>
    <property type="gene ID" value="ENSG00000144228.10"/>
</dbReference>
<dbReference type="GeneID" id="339745"/>
<dbReference type="KEGG" id="hsa:339745"/>
<dbReference type="MANE-Select" id="ENST00000280098.9">
    <property type="protein sequence ID" value="ENSP00000280098.4"/>
    <property type="RefSeq nucleotide sequence ID" value="NM_001001664.3"/>
    <property type="RefSeq protein sequence ID" value="NP_001001664.1"/>
</dbReference>
<dbReference type="UCSC" id="uc002tvh.5">
    <property type="organism name" value="human"/>
</dbReference>
<dbReference type="AGR" id="HGNC:27934"/>
<dbReference type="CTD" id="339745"/>
<dbReference type="DisGeNET" id="339745"/>
<dbReference type="GeneCards" id="SPOPL"/>
<dbReference type="HGNC" id="HGNC:27934">
    <property type="gene designation" value="SPOPL"/>
</dbReference>
<dbReference type="HPA" id="ENSG00000144228">
    <property type="expression patterns" value="Low tissue specificity"/>
</dbReference>
<dbReference type="neXtProt" id="NX_Q6IQ16"/>
<dbReference type="OpenTargets" id="ENSG00000144228"/>
<dbReference type="PharmGKB" id="PA162404650"/>
<dbReference type="VEuPathDB" id="HostDB:ENSG00000144228"/>
<dbReference type="eggNOG" id="KOG1987">
    <property type="taxonomic scope" value="Eukaryota"/>
</dbReference>
<dbReference type="GeneTree" id="ENSGT00940000155953"/>
<dbReference type="HOGENOM" id="CLU_004253_2_0_1"/>
<dbReference type="InParanoid" id="Q6IQ16"/>
<dbReference type="OMA" id="GEIFTAH"/>
<dbReference type="OrthoDB" id="6359816at2759"/>
<dbReference type="PAN-GO" id="Q6IQ16">
    <property type="GO annotations" value="5 GO annotations based on evolutionary models"/>
</dbReference>
<dbReference type="PhylomeDB" id="Q6IQ16"/>
<dbReference type="TreeFam" id="TF313419"/>
<dbReference type="PathwayCommons" id="Q6IQ16"/>
<dbReference type="Reactome" id="R-HSA-5632684">
    <property type="pathway name" value="Hedgehog 'on' state"/>
</dbReference>
<dbReference type="SignaLink" id="Q6IQ16"/>
<dbReference type="UniPathway" id="UPA00143"/>
<dbReference type="BioGRID-ORCS" id="339745">
    <property type="hits" value="13 hits in 1195 CRISPR screens"/>
</dbReference>
<dbReference type="CD-CODE" id="6F24707C">
    <property type="entry name" value="Cajal body"/>
</dbReference>
<dbReference type="ChiTaRS" id="SPOPL">
    <property type="organism name" value="human"/>
</dbReference>
<dbReference type="GenomeRNAi" id="339745"/>
<dbReference type="Pharos" id="Q6IQ16">
    <property type="development level" value="Tdark"/>
</dbReference>
<dbReference type="PRO" id="PR:Q6IQ16"/>
<dbReference type="Proteomes" id="UP000005640">
    <property type="component" value="Chromosome 2"/>
</dbReference>
<dbReference type="RNAct" id="Q6IQ16">
    <property type="molecule type" value="protein"/>
</dbReference>
<dbReference type="Bgee" id="ENSG00000144228">
    <property type="expression patterns" value="Expressed in epithelial cell of pancreas and 192 other cell types or tissues"/>
</dbReference>
<dbReference type="ExpressionAtlas" id="Q6IQ16">
    <property type="expression patterns" value="baseline and differential"/>
</dbReference>
<dbReference type="GO" id="GO:0031463">
    <property type="term" value="C:Cul3-RING ubiquitin ligase complex"/>
    <property type="evidence" value="ECO:0000314"/>
    <property type="project" value="UniProtKB"/>
</dbReference>
<dbReference type="GO" id="GO:0005737">
    <property type="term" value="C:cytoplasm"/>
    <property type="evidence" value="ECO:0000318"/>
    <property type="project" value="GO_Central"/>
</dbReference>
<dbReference type="GO" id="GO:0005634">
    <property type="term" value="C:nucleus"/>
    <property type="evidence" value="ECO:0000318"/>
    <property type="project" value="GO_Central"/>
</dbReference>
<dbReference type="GO" id="GO:0042802">
    <property type="term" value="F:identical protein binding"/>
    <property type="evidence" value="ECO:0000353"/>
    <property type="project" value="IntAct"/>
</dbReference>
<dbReference type="GO" id="GO:0031625">
    <property type="term" value="F:ubiquitin protein ligase binding"/>
    <property type="evidence" value="ECO:0000318"/>
    <property type="project" value="GO_Central"/>
</dbReference>
<dbReference type="GO" id="GO:0031397">
    <property type="term" value="P:negative regulation of protein ubiquitination"/>
    <property type="evidence" value="ECO:0000315"/>
    <property type="project" value="UniProtKB"/>
</dbReference>
<dbReference type="GO" id="GO:0043161">
    <property type="term" value="P:proteasome-mediated ubiquitin-dependent protein catabolic process"/>
    <property type="evidence" value="ECO:0000315"/>
    <property type="project" value="UniProtKB"/>
</dbReference>
<dbReference type="GO" id="GO:0016567">
    <property type="term" value="P:protein ubiquitination"/>
    <property type="evidence" value="ECO:0007669"/>
    <property type="project" value="UniProtKB-UniPathway"/>
</dbReference>
<dbReference type="GO" id="GO:0030162">
    <property type="term" value="P:regulation of proteolysis"/>
    <property type="evidence" value="ECO:0000318"/>
    <property type="project" value="GO_Central"/>
</dbReference>
<dbReference type="CDD" id="cd18519">
    <property type="entry name" value="BACK_SPOPL"/>
    <property type="match status" value="1"/>
</dbReference>
<dbReference type="CDD" id="cd18343">
    <property type="entry name" value="BTB_POZ_SPOPL"/>
    <property type="match status" value="1"/>
</dbReference>
<dbReference type="FunFam" id="2.60.210.10:FF:000028">
    <property type="entry name" value="Speckle-type POZ protein-like"/>
    <property type="match status" value="1"/>
</dbReference>
<dbReference type="FunFam" id="3.30.710.10:FF:000008">
    <property type="entry name" value="Speckle-type POZ protein-like a"/>
    <property type="match status" value="1"/>
</dbReference>
<dbReference type="Gene3D" id="6.10.250.3030">
    <property type="match status" value="1"/>
</dbReference>
<dbReference type="Gene3D" id="6.20.250.50">
    <property type="match status" value="1"/>
</dbReference>
<dbReference type="Gene3D" id="2.60.210.10">
    <property type="entry name" value="Apoptosis, Tumor Necrosis Factor Receptor Associated Protein 2, Chain A"/>
    <property type="match status" value="1"/>
</dbReference>
<dbReference type="Gene3D" id="3.30.710.10">
    <property type="entry name" value="Potassium Channel Kv1.1, Chain A"/>
    <property type="match status" value="1"/>
</dbReference>
<dbReference type="InterPro" id="IPR000210">
    <property type="entry name" value="BTB/POZ_dom"/>
</dbReference>
<dbReference type="InterPro" id="IPR002083">
    <property type="entry name" value="MATH/TRAF_dom"/>
</dbReference>
<dbReference type="InterPro" id="IPR011333">
    <property type="entry name" value="SKP1/BTB/POZ_sf"/>
</dbReference>
<dbReference type="InterPro" id="IPR008974">
    <property type="entry name" value="TRAF-like"/>
</dbReference>
<dbReference type="PANTHER" id="PTHR24413">
    <property type="entry name" value="SPECKLE-TYPE POZ PROTEIN"/>
    <property type="match status" value="1"/>
</dbReference>
<dbReference type="Pfam" id="PF00651">
    <property type="entry name" value="BTB"/>
    <property type="match status" value="1"/>
</dbReference>
<dbReference type="Pfam" id="PF22486">
    <property type="entry name" value="MATH_2"/>
    <property type="match status" value="1"/>
</dbReference>
<dbReference type="SMART" id="SM00225">
    <property type="entry name" value="BTB"/>
    <property type="match status" value="1"/>
</dbReference>
<dbReference type="SMART" id="SM00061">
    <property type="entry name" value="MATH"/>
    <property type="match status" value="1"/>
</dbReference>
<dbReference type="SUPFAM" id="SSF54695">
    <property type="entry name" value="POZ domain"/>
    <property type="match status" value="1"/>
</dbReference>
<dbReference type="SUPFAM" id="SSF49599">
    <property type="entry name" value="TRAF domain-like"/>
    <property type="match status" value="1"/>
</dbReference>
<dbReference type="PROSITE" id="PS50097">
    <property type="entry name" value="BTB"/>
    <property type="match status" value="1"/>
</dbReference>
<dbReference type="PROSITE" id="PS50144">
    <property type="entry name" value="MATH"/>
    <property type="match status" value="1"/>
</dbReference>
<gene>
    <name type="primary">SPOPL</name>
</gene>
<protein>
    <recommendedName>
        <fullName>Speckle-type POZ protein-like</fullName>
    </recommendedName>
    <alternativeName>
        <fullName>HIB homolog 2</fullName>
    </alternativeName>
    <alternativeName>
        <fullName>Roadkill homolog 2</fullName>
    </alternativeName>
</protein>
<reference key="1">
    <citation type="journal article" date="2004" name="Genome Res.">
        <title>The status, quality, and expansion of the NIH full-length cDNA project: the Mammalian Gene Collection (MGC).</title>
        <authorList>
            <consortium name="The MGC Project Team"/>
        </authorList>
    </citation>
    <scope>NUCLEOTIDE SEQUENCE [LARGE SCALE MRNA]</scope>
    <source>
        <tissue>Brain</tissue>
    </source>
</reference>
<reference key="2">
    <citation type="journal article" date="2006" name="Development">
        <title>Roadkill attenuates Hedgehog responses through degradation of Cubitus interruptus.</title>
        <authorList>
            <person name="Kent D."/>
            <person name="Bush E.W."/>
            <person name="Hooper J.E."/>
        </authorList>
    </citation>
    <scope>IDENTIFICATION</scope>
</reference>
<reference key="3">
    <citation type="journal article" date="2006" name="Dev. Cell">
        <title>A hedgehog-induced BTB protein modulates hedgehog signaling by degrading Ci/Gli transcription factor.</title>
        <authorList>
            <person name="Zhang Q."/>
            <person name="Zhang L."/>
            <person name="Wang B."/>
            <person name="Ou C.-Y."/>
            <person name="Chien C.-T."/>
            <person name="Jiang J."/>
        </authorList>
    </citation>
    <scope>IDENTIFICATION</scope>
</reference>
<reference key="4">
    <citation type="journal article" date="2012" name="Structure">
        <title>Adaptor protein self-assembly drives the control of a cullin-RING ubiquitin ligase.</title>
        <authorList>
            <person name="Errington W.J."/>
            <person name="Khan M.Q."/>
            <person name="Bueler S.A."/>
            <person name="Rubinstein J.L."/>
            <person name="Chakrabartty A."/>
            <person name="Prive G.G."/>
        </authorList>
    </citation>
    <scope>FUNCTION</scope>
    <scope>SUBUNIT</scope>
    <scope>INTERACTION WITH CUL3 AND MACROH2A1</scope>
</reference>
<feature type="chain" id="PRO_0000274588" description="Speckle-type POZ protein-like">
    <location>
        <begin position="1"/>
        <end position="392"/>
    </location>
</feature>
<feature type="domain" description="MATH" evidence="3">
    <location>
        <begin position="31"/>
        <end position="161"/>
    </location>
</feature>
<feature type="domain" description="BTB" evidence="2">
    <location>
        <begin position="200"/>
        <end position="267"/>
    </location>
</feature>
<feature type="sequence variant" id="VAR_053719" description="In dbSNP:rs36099753.">
    <original>R</original>
    <variation>Q</variation>
    <location>
        <position position="45"/>
    </location>
</feature>
<proteinExistence type="evidence at protein level"/>
<name>SPOPL_HUMAN</name>
<evidence type="ECO:0000250" key="1"/>
<evidence type="ECO:0000255" key="2">
    <source>
        <dbReference type="PROSITE-ProRule" id="PRU00037"/>
    </source>
</evidence>
<evidence type="ECO:0000255" key="3">
    <source>
        <dbReference type="PROSITE-ProRule" id="PRU00129"/>
    </source>
</evidence>
<evidence type="ECO:0000269" key="4">
    <source>
    </source>
</evidence>
<evidence type="ECO:0000305" key="5"/>